<feature type="chain" id="PRO_1000008250" description="Translation initiation factor IF-2">
    <location>
        <begin position="1"/>
        <end position="844"/>
    </location>
</feature>
<feature type="domain" description="tr-type G">
    <location>
        <begin position="343"/>
        <end position="513"/>
    </location>
</feature>
<feature type="region of interest" description="Disordered" evidence="3">
    <location>
        <begin position="1"/>
        <end position="35"/>
    </location>
</feature>
<feature type="region of interest" description="Disordered" evidence="3">
    <location>
        <begin position="79"/>
        <end position="248"/>
    </location>
</feature>
<feature type="region of interest" description="G1" evidence="1">
    <location>
        <begin position="352"/>
        <end position="359"/>
    </location>
</feature>
<feature type="region of interest" description="G2" evidence="1">
    <location>
        <begin position="377"/>
        <end position="381"/>
    </location>
</feature>
<feature type="region of interest" description="G3" evidence="1">
    <location>
        <begin position="399"/>
        <end position="402"/>
    </location>
</feature>
<feature type="region of interest" description="G4" evidence="1">
    <location>
        <begin position="453"/>
        <end position="456"/>
    </location>
</feature>
<feature type="region of interest" description="G5" evidence="1">
    <location>
        <begin position="489"/>
        <end position="491"/>
    </location>
</feature>
<feature type="compositionally biased region" description="Basic and acidic residues" evidence="3">
    <location>
        <begin position="1"/>
        <end position="11"/>
    </location>
</feature>
<feature type="compositionally biased region" description="Low complexity" evidence="3">
    <location>
        <begin position="21"/>
        <end position="33"/>
    </location>
</feature>
<feature type="compositionally biased region" description="Basic and acidic residues" evidence="3">
    <location>
        <begin position="79"/>
        <end position="161"/>
    </location>
</feature>
<feature type="compositionally biased region" description="Acidic residues" evidence="3">
    <location>
        <begin position="162"/>
        <end position="175"/>
    </location>
</feature>
<feature type="compositionally biased region" description="Basic residues" evidence="3">
    <location>
        <begin position="200"/>
        <end position="210"/>
    </location>
</feature>
<feature type="compositionally biased region" description="Basic and acidic residues" evidence="3">
    <location>
        <begin position="211"/>
        <end position="237"/>
    </location>
</feature>
<feature type="binding site" evidence="2">
    <location>
        <begin position="352"/>
        <end position="359"/>
    </location>
    <ligand>
        <name>GTP</name>
        <dbReference type="ChEBI" id="CHEBI:37565"/>
    </ligand>
</feature>
<feature type="binding site" evidence="2">
    <location>
        <begin position="399"/>
        <end position="403"/>
    </location>
    <ligand>
        <name>GTP</name>
        <dbReference type="ChEBI" id="CHEBI:37565"/>
    </ligand>
</feature>
<feature type="binding site" evidence="2">
    <location>
        <begin position="453"/>
        <end position="456"/>
    </location>
    <ligand>
        <name>GTP</name>
        <dbReference type="ChEBI" id="CHEBI:37565"/>
    </ligand>
</feature>
<proteinExistence type="inferred from homology"/>
<accession>A5UF34</accession>
<dbReference type="EMBL" id="CP000672">
    <property type="protein sequence ID" value="ABQ99389.1"/>
    <property type="molecule type" value="Genomic_DNA"/>
</dbReference>
<dbReference type="SMR" id="A5UF34"/>
<dbReference type="KEGG" id="hiq:CGSHiGG_01560"/>
<dbReference type="HOGENOM" id="CLU_006301_6_3_6"/>
<dbReference type="Proteomes" id="UP000001990">
    <property type="component" value="Chromosome"/>
</dbReference>
<dbReference type="GO" id="GO:0005829">
    <property type="term" value="C:cytosol"/>
    <property type="evidence" value="ECO:0007669"/>
    <property type="project" value="TreeGrafter"/>
</dbReference>
<dbReference type="GO" id="GO:0005525">
    <property type="term" value="F:GTP binding"/>
    <property type="evidence" value="ECO:0007669"/>
    <property type="project" value="UniProtKB-KW"/>
</dbReference>
<dbReference type="GO" id="GO:0003924">
    <property type="term" value="F:GTPase activity"/>
    <property type="evidence" value="ECO:0007669"/>
    <property type="project" value="UniProtKB-UniRule"/>
</dbReference>
<dbReference type="GO" id="GO:0097216">
    <property type="term" value="F:guanosine tetraphosphate binding"/>
    <property type="evidence" value="ECO:0007669"/>
    <property type="project" value="UniProtKB-ARBA"/>
</dbReference>
<dbReference type="GO" id="GO:0003743">
    <property type="term" value="F:translation initiation factor activity"/>
    <property type="evidence" value="ECO:0007669"/>
    <property type="project" value="UniProtKB-UniRule"/>
</dbReference>
<dbReference type="CDD" id="cd01887">
    <property type="entry name" value="IF2_eIF5B"/>
    <property type="match status" value="1"/>
</dbReference>
<dbReference type="CDD" id="cd03702">
    <property type="entry name" value="IF2_mtIF2_II"/>
    <property type="match status" value="1"/>
</dbReference>
<dbReference type="CDD" id="cd03692">
    <property type="entry name" value="mtIF2_IVc"/>
    <property type="match status" value="1"/>
</dbReference>
<dbReference type="FunFam" id="2.40.30.10:FF:000007">
    <property type="entry name" value="Translation initiation factor IF-2"/>
    <property type="match status" value="1"/>
</dbReference>
<dbReference type="FunFam" id="2.40.30.10:FF:000008">
    <property type="entry name" value="Translation initiation factor IF-2"/>
    <property type="match status" value="1"/>
</dbReference>
<dbReference type="FunFam" id="3.40.50.10050:FF:000001">
    <property type="entry name" value="Translation initiation factor IF-2"/>
    <property type="match status" value="1"/>
</dbReference>
<dbReference type="FunFam" id="3.40.50.300:FF:000019">
    <property type="entry name" value="Translation initiation factor IF-2"/>
    <property type="match status" value="1"/>
</dbReference>
<dbReference type="Gene3D" id="3.40.50.300">
    <property type="entry name" value="P-loop containing nucleotide triphosphate hydrolases"/>
    <property type="match status" value="1"/>
</dbReference>
<dbReference type="Gene3D" id="2.40.30.10">
    <property type="entry name" value="Translation factors"/>
    <property type="match status" value="2"/>
</dbReference>
<dbReference type="Gene3D" id="3.40.50.10050">
    <property type="entry name" value="Translation initiation factor IF- 2, domain 3"/>
    <property type="match status" value="1"/>
</dbReference>
<dbReference type="HAMAP" id="MF_00100_B">
    <property type="entry name" value="IF_2_B"/>
    <property type="match status" value="1"/>
</dbReference>
<dbReference type="InterPro" id="IPR053905">
    <property type="entry name" value="EF-G-like_DII"/>
</dbReference>
<dbReference type="InterPro" id="IPR004161">
    <property type="entry name" value="EFTu-like_2"/>
</dbReference>
<dbReference type="InterPro" id="IPR013575">
    <property type="entry name" value="IF2_assoc_dom_bac"/>
</dbReference>
<dbReference type="InterPro" id="IPR044145">
    <property type="entry name" value="IF2_II"/>
</dbReference>
<dbReference type="InterPro" id="IPR006847">
    <property type="entry name" value="IF2_N"/>
</dbReference>
<dbReference type="InterPro" id="IPR027417">
    <property type="entry name" value="P-loop_NTPase"/>
</dbReference>
<dbReference type="InterPro" id="IPR005225">
    <property type="entry name" value="Small_GTP-bd"/>
</dbReference>
<dbReference type="InterPro" id="IPR000795">
    <property type="entry name" value="T_Tr_GTP-bd_dom"/>
</dbReference>
<dbReference type="InterPro" id="IPR000178">
    <property type="entry name" value="TF_IF2_bacterial-like"/>
</dbReference>
<dbReference type="InterPro" id="IPR015760">
    <property type="entry name" value="TIF_IF2"/>
</dbReference>
<dbReference type="InterPro" id="IPR023115">
    <property type="entry name" value="TIF_IF2_dom3"/>
</dbReference>
<dbReference type="InterPro" id="IPR036925">
    <property type="entry name" value="TIF_IF2_dom3_sf"/>
</dbReference>
<dbReference type="InterPro" id="IPR009000">
    <property type="entry name" value="Transl_B-barrel_sf"/>
</dbReference>
<dbReference type="NCBIfam" id="TIGR00487">
    <property type="entry name" value="IF-2"/>
    <property type="match status" value="1"/>
</dbReference>
<dbReference type="NCBIfam" id="TIGR00231">
    <property type="entry name" value="small_GTP"/>
    <property type="match status" value="1"/>
</dbReference>
<dbReference type="PANTHER" id="PTHR43381:SF5">
    <property type="entry name" value="TR-TYPE G DOMAIN-CONTAINING PROTEIN"/>
    <property type="match status" value="1"/>
</dbReference>
<dbReference type="PANTHER" id="PTHR43381">
    <property type="entry name" value="TRANSLATION INITIATION FACTOR IF-2-RELATED"/>
    <property type="match status" value="1"/>
</dbReference>
<dbReference type="Pfam" id="PF22042">
    <property type="entry name" value="EF-G_D2"/>
    <property type="match status" value="1"/>
</dbReference>
<dbReference type="Pfam" id="PF00009">
    <property type="entry name" value="GTP_EFTU"/>
    <property type="match status" value="1"/>
</dbReference>
<dbReference type="Pfam" id="PF03144">
    <property type="entry name" value="GTP_EFTU_D2"/>
    <property type="match status" value="1"/>
</dbReference>
<dbReference type="Pfam" id="PF11987">
    <property type="entry name" value="IF-2"/>
    <property type="match status" value="1"/>
</dbReference>
<dbReference type="Pfam" id="PF08364">
    <property type="entry name" value="IF2_assoc"/>
    <property type="match status" value="1"/>
</dbReference>
<dbReference type="Pfam" id="PF04760">
    <property type="entry name" value="IF2_N"/>
    <property type="match status" value="1"/>
</dbReference>
<dbReference type="SUPFAM" id="SSF52156">
    <property type="entry name" value="Initiation factor IF2/eIF5b, domain 3"/>
    <property type="match status" value="1"/>
</dbReference>
<dbReference type="SUPFAM" id="SSF52540">
    <property type="entry name" value="P-loop containing nucleoside triphosphate hydrolases"/>
    <property type="match status" value="1"/>
</dbReference>
<dbReference type="SUPFAM" id="SSF50447">
    <property type="entry name" value="Translation proteins"/>
    <property type="match status" value="2"/>
</dbReference>
<dbReference type="PROSITE" id="PS51722">
    <property type="entry name" value="G_TR_2"/>
    <property type="match status" value="1"/>
</dbReference>
<dbReference type="PROSITE" id="PS01176">
    <property type="entry name" value="IF2"/>
    <property type="match status" value="1"/>
</dbReference>
<comment type="function">
    <text evidence="2">One of the essential components for the initiation of protein synthesis. Protects formylmethionyl-tRNA from spontaneous hydrolysis and promotes its binding to the 30S ribosomal subunits. Also involved in the hydrolysis of GTP during the formation of the 70S ribosomal complex.</text>
</comment>
<comment type="subcellular location">
    <subcellularLocation>
        <location evidence="2">Cytoplasm</location>
    </subcellularLocation>
</comment>
<comment type="similarity">
    <text evidence="2">Belongs to the TRAFAC class translation factor GTPase superfamily. Classic translation factor GTPase family. IF-2 subfamily.</text>
</comment>
<organism>
    <name type="scientific">Haemophilus influenzae (strain PittGG)</name>
    <dbReference type="NCBI Taxonomy" id="374931"/>
    <lineage>
        <taxon>Bacteria</taxon>
        <taxon>Pseudomonadati</taxon>
        <taxon>Pseudomonadota</taxon>
        <taxon>Gammaproteobacteria</taxon>
        <taxon>Pasteurellales</taxon>
        <taxon>Pasteurellaceae</taxon>
        <taxon>Haemophilus</taxon>
    </lineage>
</organism>
<reference key="1">
    <citation type="journal article" date="2007" name="Genome Biol.">
        <title>Characterization and modeling of the Haemophilus influenzae core and supragenomes based on the complete genomic sequences of Rd and 12 clinical nontypeable strains.</title>
        <authorList>
            <person name="Hogg J.S."/>
            <person name="Hu F.Z."/>
            <person name="Janto B."/>
            <person name="Boissy R."/>
            <person name="Hayes J."/>
            <person name="Keefe R."/>
            <person name="Post J.C."/>
            <person name="Ehrlich G.D."/>
        </authorList>
    </citation>
    <scope>NUCLEOTIDE SEQUENCE [LARGE SCALE GENOMIC DNA]</scope>
    <source>
        <strain>PittGG</strain>
    </source>
</reference>
<keyword id="KW-0963">Cytoplasm</keyword>
<keyword id="KW-0342">GTP-binding</keyword>
<keyword id="KW-0396">Initiation factor</keyword>
<keyword id="KW-0547">Nucleotide-binding</keyword>
<keyword id="KW-0648">Protein biosynthesis</keyword>
<sequence>MTEDVKADVPKKLSIQRRTKTTVSGTTTSGKSKAVQVEVRKKRTVKTDIAQQEEAKLKAQQEAEAKKIAEQKAAEEKARLEAEKAATKKEADEKSKAEKAKAETAKPAKSAVDSKAKFVDPEKEKRKAEEAELRRKAEEVARQKAEEQARRAAEEAKRYAEADDSDNESSSEDYSDYNLSSRYALEAEDEEDRRNENRGRGKNKVAKAKKGGRDDENSKNSKNERESNRKNQKDAKFGKGKNGKKGAALQQAFTKPAQVVKSDVVIGETITVAELANKMAVKATEIIKMMMKMGEMVTINQVIDQETAQLVAEELGHKVILRNENELEEAVLGDRDVNAEKVTRAPVVTIMGHVDHGKTSLLDYIRKAKVAAGEAGGITQHIGAYHVEMDDGKMITFLDTPGHAAFTSMRARGAKATDIVVLVVAADDGVMPQTIEAIQHAKAAGAPLVVAVNKIDKPEANPDRVEQELLQHDVISEKFGGDVQFVPVSAKKGTGVDDLLDAILLQSEVLELTAVKDGMASGVVIESYLDKGRGPVATILVQSGTLRKGDIVLCGFEYGRARAMRDENGKEVDEAGPSIPVELLGLSGVPAAGDEATVVRDEKKAREVALYRQGKFREVKLARQQKAKLENMFSNMSEGDVAELNVIVKADVQGSVEAIVQALNELSTNEVKVKVVGSGVGGITETDATLATASNAIIVGFNVRADATARRVIEAENIDLRYYSIIYELLNEIKAAMSGMLEPEFKQEIIGLAEVRDVFRHPKFGAIAGCMVTEGVVKRNNPIRVLRDNVVIFEGELESLRRFKDDVSEVRNGMECGIGVKNYNDVKVGDQIEVFEVVEVKRSI</sequence>
<evidence type="ECO:0000250" key="1"/>
<evidence type="ECO:0000255" key="2">
    <source>
        <dbReference type="HAMAP-Rule" id="MF_00100"/>
    </source>
</evidence>
<evidence type="ECO:0000256" key="3">
    <source>
        <dbReference type="SAM" id="MobiDB-lite"/>
    </source>
</evidence>
<gene>
    <name evidence="2" type="primary">infB</name>
    <name type="ordered locus">CGSHiGG_01560</name>
</gene>
<name>IF2_HAEIG</name>
<protein>
    <recommendedName>
        <fullName evidence="2">Translation initiation factor IF-2</fullName>
    </recommendedName>
</protein>